<gene>
    <name evidence="1" type="primary">psd</name>
    <name type="ordered locus">PG_0965</name>
</gene>
<comment type="function">
    <text evidence="1">Catalyzes the formation of phosphatidylethanolamine (PtdEtn) from phosphatidylserine (PtdSer).</text>
</comment>
<comment type="catalytic activity">
    <reaction evidence="1">
        <text>a 1,2-diacyl-sn-glycero-3-phospho-L-serine + H(+) = a 1,2-diacyl-sn-glycero-3-phosphoethanolamine + CO2</text>
        <dbReference type="Rhea" id="RHEA:20828"/>
        <dbReference type="ChEBI" id="CHEBI:15378"/>
        <dbReference type="ChEBI" id="CHEBI:16526"/>
        <dbReference type="ChEBI" id="CHEBI:57262"/>
        <dbReference type="ChEBI" id="CHEBI:64612"/>
        <dbReference type="EC" id="4.1.1.65"/>
    </reaction>
</comment>
<comment type="cofactor">
    <cofactor evidence="1">
        <name>pyruvate</name>
        <dbReference type="ChEBI" id="CHEBI:15361"/>
    </cofactor>
    <text evidence="1">Binds 1 pyruvoyl group covalently per subunit.</text>
</comment>
<comment type="pathway">
    <text evidence="1">Phospholipid metabolism; phosphatidylethanolamine biosynthesis; phosphatidylethanolamine from CDP-diacylglycerol: step 2/2.</text>
</comment>
<comment type="subunit">
    <text evidence="1">Heterodimer of a large membrane-associated beta subunit and a small pyruvoyl-containing alpha subunit.</text>
</comment>
<comment type="subcellular location">
    <subcellularLocation>
        <location evidence="1">Cell membrane</location>
        <topology evidence="1">Peripheral membrane protein</topology>
    </subcellularLocation>
</comment>
<comment type="PTM">
    <text evidence="1">Is synthesized initially as an inactive proenzyme. Formation of the active enzyme involves a self-maturation process in which the active site pyruvoyl group is generated from an internal serine residue via an autocatalytic post-translational modification. Two non-identical subunits are generated from the proenzyme in this reaction, and the pyruvate is formed at the N-terminus of the alpha chain, which is derived from the carboxyl end of the proenzyme. The post-translation cleavage follows an unusual pathway, termed non-hydrolytic serinolysis, in which the side chain hydroxyl group of the serine supplies its oxygen atom to form the C-terminus of the beta chain, while the remainder of the serine residue undergoes an oxidative deamination to produce ammonia and the pyruvoyl prosthetic group on the alpha chain.</text>
</comment>
<comment type="similarity">
    <text evidence="1">Belongs to the phosphatidylserine decarboxylase family. PSD-A subfamily.</text>
</comment>
<reference key="1">
    <citation type="journal article" date="2003" name="J. Bacteriol.">
        <title>Complete genome sequence of the oral pathogenic bacterium Porphyromonas gingivalis strain W83.</title>
        <authorList>
            <person name="Nelson K.E."/>
            <person name="Fleischmann R.D."/>
            <person name="DeBoy R.T."/>
            <person name="Paulsen I.T."/>
            <person name="Fouts D.E."/>
            <person name="Eisen J.A."/>
            <person name="Daugherty S.C."/>
            <person name="Dodson R.J."/>
            <person name="Durkin A.S."/>
            <person name="Gwinn M.L."/>
            <person name="Haft D.H."/>
            <person name="Kolonay J.F."/>
            <person name="Nelson W.C."/>
            <person name="Mason T.M."/>
            <person name="Tallon L."/>
            <person name="Gray J."/>
            <person name="Granger D."/>
            <person name="Tettelin H."/>
            <person name="Dong H."/>
            <person name="Galvin J.L."/>
            <person name="Duncan M.J."/>
            <person name="Dewhirst F.E."/>
            <person name="Fraser C.M."/>
        </authorList>
    </citation>
    <scope>NUCLEOTIDE SEQUENCE [LARGE SCALE GENOMIC DNA]</scope>
    <source>
        <strain>ATCC BAA-308 / W83</strain>
    </source>
</reference>
<feature type="chain" id="PRO_0000029793" description="Phosphatidylserine decarboxylase beta chain" evidence="1">
    <location>
        <begin position="1"/>
        <end position="188"/>
    </location>
</feature>
<feature type="chain" id="PRO_0000029794" description="Phosphatidylserine decarboxylase alpha chain" evidence="1">
    <location>
        <begin position="189"/>
        <end position="221"/>
    </location>
</feature>
<feature type="active site" description="Schiff-base intermediate with substrate; via pyruvic acid" evidence="1">
    <location>
        <position position="189"/>
    </location>
</feature>
<feature type="site" description="Cleavage (non-hydrolytic); by autocatalysis" evidence="1">
    <location>
        <begin position="188"/>
        <end position="189"/>
    </location>
</feature>
<feature type="modified residue" description="Pyruvic acid (Ser); by autocatalysis" evidence="1">
    <location>
        <position position="189"/>
    </location>
</feature>
<name>PSD_PORGI</name>
<proteinExistence type="inferred from homology"/>
<keyword id="KW-1003">Cell membrane</keyword>
<keyword id="KW-0210">Decarboxylase</keyword>
<keyword id="KW-0444">Lipid biosynthesis</keyword>
<keyword id="KW-0443">Lipid metabolism</keyword>
<keyword id="KW-0456">Lyase</keyword>
<keyword id="KW-0472">Membrane</keyword>
<keyword id="KW-0594">Phospholipid biosynthesis</keyword>
<keyword id="KW-1208">Phospholipid metabolism</keyword>
<keyword id="KW-0670">Pyruvate</keyword>
<keyword id="KW-1185">Reference proteome</keyword>
<keyword id="KW-0865">Zymogen</keyword>
<organism>
    <name type="scientific">Porphyromonas gingivalis (strain ATCC BAA-308 / W83)</name>
    <dbReference type="NCBI Taxonomy" id="242619"/>
    <lineage>
        <taxon>Bacteria</taxon>
        <taxon>Pseudomonadati</taxon>
        <taxon>Bacteroidota</taxon>
        <taxon>Bacteroidia</taxon>
        <taxon>Bacteroidales</taxon>
        <taxon>Porphyromonadaceae</taxon>
        <taxon>Porphyromonas</taxon>
    </lineage>
</organism>
<sequence>MKVHKESTGLLVSMATLFTGICLSLFYFLGASIVSYLVMIIAIFLYLLTINFFRCPKRHSPFANDDRAVVAPADGKIVAIEEVSENEILHERCIQVSIFMSIFNVHANWFPCEGKVTHVSHKNGHFIAAYLPKSSTDNERSAIVIKTEKGARILARQIAGALARRIVTYAEVGDICSVDAHMGFIKFGSRVDVYLPLGSQVEVKMDQKTVGNQTLIARLPE</sequence>
<dbReference type="EC" id="4.1.1.65" evidence="1"/>
<dbReference type="EMBL" id="AE015924">
    <property type="protein sequence ID" value="AAQ66094.1"/>
    <property type="molecule type" value="Genomic_DNA"/>
</dbReference>
<dbReference type="RefSeq" id="WP_004584192.1">
    <property type="nucleotide sequence ID" value="NC_002950.2"/>
</dbReference>
<dbReference type="STRING" id="242619.PG_0965"/>
<dbReference type="EnsemblBacteria" id="AAQ66094">
    <property type="protein sequence ID" value="AAQ66094"/>
    <property type="gene ID" value="PG_0965"/>
</dbReference>
<dbReference type="GeneID" id="29256196"/>
<dbReference type="KEGG" id="pgi:PG_0965"/>
<dbReference type="eggNOG" id="COG0688">
    <property type="taxonomic scope" value="Bacteria"/>
</dbReference>
<dbReference type="HOGENOM" id="CLU_072492_1_0_10"/>
<dbReference type="UniPathway" id="UPA00558">
    <property type="reaction ID" value="UER00616"/>
</dbReference>
<dbReference type="Proteomes" id="UP000000588">
    <property type="component" value="Chromosome"/>
</dbReference>
<dbReference type="GO" id="GO:0005886">
    <property type="term" value="C:plasma membrane"/>
    <property type="evidence" value="ECO:0007669"/>
    <property type="project" value="UniProtKB-SubCell"/>
</dbReference>
<dbReference type="GO" id="GO:0004609">
    <property type="term" value="F:phosphatidylserine decarboxylase activity"/>
    <property type="evidence" value="ECO:0007669"/>
    <property type="project" value="UniProtKB-UniRule"/>
</dbReference>
<dbReference type="GO" id="GO:0006646">
    <property type="term" value="P:phosphatidylethanolamine biosynthetic process"/>
    <property type="evidence" value="ECO:0007669"/>
    <property type="project" value="UniProtKB-UniRule"/>
</dbReference>
<dbReference type="HAMAP" id="MF_00664">
    <property type="entry name" value="PS_decarb_PSD_A"/>
    <property type="match status" value="1"/>
</dbReference>
<dbReference type="InterPro" id="IPR003817">
    <property type="entry name" value="PS_Dcarbxylase"/>
</dbReference>
<dbReference type="InterPro" id="IPR033175">
    <property type="entry name" value="PSD-A"/>
</dbReference>
<dbReference type="NCBIfam" id="NF003678">
    <property type="entry name" value="PRK05305.1-2"/>
    <property type="match status" value="1"/>
</dbReference>
<dbReference type="PANTHER" id="PTHR35809">
    <property type="entry name" value="ARCHAETIDYLSERINE DECARBOXYLASE PROENZYME-RELATED"/>
    <property type="match status" value="1"/>
</dbReference>
<dbReference type="PANTHER" id="PTHR35809:SF1">
    <property type="entry name" value="ARCHAETIDYLSERINE DECARBOXYLASE PROENZYME-RELATED"/>
    <property type="match status" value="1"/>
</dbReference>
<dbReference type="Pfam" id="PF02666">
    <property type="entry name" value="PS_Dcarbxylase"/>
    <property type="match status" value="1"/>
</dbReference>
<evidence type="ECO:0000255" key="1">
    <source>
        <dbReference type="HAMAP-Rule" id="MF_00664"/>
    </source>
</evidence>
<protein>
    <recommendedName>
        <fullName evidence="1">Phosphatidylserine decarboxylase proenzyme</fullName>
        <ecNumber evidence="1">4.1.1.65</ecNumber>
    </recommendedName>
    <component>
        <recommendedName>
            <fullName evidence="1">Phosphatidylserine decarboxylase alpha chain</fullName>
        </recommendedName>
    </component>
    <component>
        <recommendedName>
            <fullName evidence="1">Phosphatidylserine decarboxylase beta chain</fullName>
        </recommendedName>
    </component>
</protein>
<accession>Q7MVS5</accession>